<gene>
    <name type="primary">F3</name>
    <name type="synonym">Cf3</name>
</gene>
<comment type="function">
    <text>Initiates blood coagulation by forming a complex with circulating factor VII or VIIa. The [TF:VIIa] complex activates factors IX or X by specific limited proteolysis. TF plays a role in normal hemostasis by initiating the cell-surface assembly and propagation of the coagulation protease cascade.</text>
</comment>
<comment type="subunit">
    <text evidence="1">Interacts with HSPE; the interaction, inhibited by heparin, promotes the generation of activated factor X and activates coagulation in the presence of activated factor VII.</text>
</comment>
<comment type="subcellular location">
    <subcellularLocation>
        <location evidence="2">Membrane</location>
        <topology evidence="2">Single-pass type I membrane protein</topology>
    </subcellularLocation>
</comment>
<comment type="similarity">
    <text evidence="4">Belongs to the tissue factor family.</text>
</comment>
<name>TF_RAT</name>
<dbReference type="EMBL" id="U07619">
    <property type="protein sequence ID" value="AAA16966.1"/>
    <property type="molecule type" value="mRNA"/>
</dbReference>
<dbReference type="SMR" id="P42533"/>
<dbReference type="FunCoup" id="P42533">
    <property type="interactions" value="127"/>
</dbReference>
<dbReference type="STRING" id="10116.ENSRNOP00000015836"/>
<dbReference type="GlyCosmos" id="P42533">
    <property type="glycosylation" value="6 sites, No reported glycans"/>
</dbReference>
<dbReference type="GlyGen" id="P42533">
    <property type="glycosylation" value="6 sites"/>
</dbReference>
<dbReference type="PhosphoSitePlus" id="P42533"/>
<dbReference type="SwissPalm" id="P42533"/>
<dbReference type="PaxDb" id="10116-ENSRNOP00000015836"/>
<dbReference type="UCSC" id="RGD:2587">
    <property type="organism name" value="rat"/>
</dbReference>
<dbReference type="AGR" id="RGD:2587"/>
<dbReference type="RGD" id="2587">
    <property type="gene designation" value="F3"/>
</dbReference>
<dbReference type="eggNOG" id="ENOG502RA1F">
    <property type="taxonomic scope" value="Eukaryota"/>
</dbReference>
<dbReference type="InParanoid" id="P42533"/>
<dbReference type="OrthoDB" id="8942372at2759"/>
<dbReference type="PhylomeDB" id="P42533"/>
<dbReference type="Reactome" id="R-RNO-140834">
    <property type="pathway name" value="Extrinsic Pathway of Fibrin Clot Formation"/>
</dbReference>
<dbReference type="PRO" id="PR:P42533"/>
<dbReference type="Proteomes" id="UP000002494">
    <property type="component" value="Unplaced"/>
</dbReference>
<dbReference type="GO" id="GO:0009986">
    <property type="term" value="C:cell surface"/>
    <property type="evidence" value="ECO:0000314"/>
    <property type="project" value="RGD"/>
</dbReference>
<dbReference type="GO" id="GO:0005615">
    <property type="term" value="C:extracellular space"/>
    <property type="evidence" value="ECO:0000314"/>
    <property type="project" value="RGD"/>
</dbReference>
<dbReference type="GO" id="GO:0005886">
    <property type="term" value="C:plasma membrane"/>
    <property type="evidence" value="ECO:0000318"/>
    <property type="project" value="GO_Central"/>
</dbReference>
<dbReference type="GO" id="GO:1905286">
    <property type="term" value="C:serine-type peptidase complex"/>
    <property type="evidence" value="ECO:0000266"/>
    <property type="project" value="RGD"/>
</dbReference>
<dbReference type="GO" id="GO:0004896">
    <property type="term" value="F:cytokine receptor activity"/>
    <property type="evidence" value="ECO:0000318"/>
    <property type="project" value="GO_Central"/>
</dbReference>
<dbReference type="GO" id="GO:0005543">
    <property type="term" value="F:phospholipid binding"/>
    <property type="evidence" value="ECO:0000266"/>
    <property type="project" value="RGD"/>
</dbReference>
<dbReference type="GO" id="GO:0002020">
    <property type="term" value="F:protease binding"/>
    <property type="evidence" value="ECO:0000353"/>
    <property type="project" value="RGD"/>
</dbReference>
<dbReference type="GO" id="GO:0002541">
    <property type="term" value="P:activation of plasma proteins involved in acute inflammatory response"/>
    <property type="evidence" value="ECO:0000266"/>
    <property type="project" value="RGD"/>
</dbReference>
<dbReference type="GO" id="GO:0007596">
    <property type="term" value="P:blood coagulation"/>
    <property type="evidence" value="ECO:0000266"/>
    <property type="project" value="RGD"/>
</dbReference>
<dbReference type="GO" id="GO:0070301">
    <property type="term" value="P:cellular response to hydrogen peroxide"/>
    <property type="evidence" value="ECO:0000270"/>
    <property type="project" value="RGD"/>
</dbReference>
<dbReference type="GO" id="GO:0071404">
    <property type="term" value="P:cellular response to low-density lipoprotein particle stimulus"/>
    <property type="evidence" value="ECO:0000270"/>
    <property type="project" value="RGD"/>
</dbReference>
<dbReference type="GO" id="GO:0019221">
    <property type="term" value="P:cytokine-mediated signaling pathway"/>
    <property type="evidence" value="ECO:0000318"/>
    <property type="project" value="GO_Central"/>
</dbReference>
<dbReference type="GO" id="GO:0045766">
    <property type="term" value="P:positive regulation of angiogenesis"/>
    <property type="evidence" value="ECO:0000266"/>
    <property type="project" value="RGD"/>
</dbReference>
<dbReference type="GO" id="GO:2000353">
    <property type="term" value="P:positive regulation of endothelial cell apoptotic process"/>
    <property type="evidence" value="ECO:0000266"/>
    <property type="project" value="RGD"/>
</dbReference>
<dbReference type="GO" id="GO:0001938">
    <property type="term" value="P:positive regulation of endothelial cell proliferation"/>
    <property type="evidence" value="ECO:0000266"/>
    <property type="project" value="RGD"/>
</dbReference>
<dbReference type="GO" id="GO:0010628">
    <property type="term" value="P:positive regulation of gene expression"/>
    <property type="evidence" value="ECO:0000266"/>
    <property type="project" value="RGD"/>
</dbReference>
<dbReference type="GO" id="GO:0032757">
    <property type="term" value="P:positive regulation of interleukin-8 production"/>
    <property type="evidence" value="ECO:0000266"/>
    <property type="project" value="RGD"/>
</dbReference>
<dbReference type="GO" id="GO:0010641">
    <property type="term" value="P:positive regulation of platelet-derived growth factor receptor signaling pathway"/>
    <property type="evidence" value="ECO:0000266"/>
    <property type="project" value="RGD"/>
</dbReference>
<dbReference type="GO" id="GO:0014911">
    <property type="term" value="P:positive regulation of smooth muscle cell migration"/>
    <property type="evidence" value="ECO:0000314"/>
    <property type="project" value="RGD"/>
</dbReference>
<dbReference type="GO" id="GO:0032008">
    <property type="term" value="P:positive regulation of TOR signaling"/>
    <property type="evidence" value="ECO:0000266"/>
    <property type="project" value="RGD"/>
</dbReference>
<dbReference type="GO" id="GO:0016485">
    <property type="term" value="P:protein processing"/>
    <property type="evidence" value="ECO:0000266"/>
    <property type="project" value="RGD"/>
</dbReference>
<dbReference type="GO" id="GO:0032355">
    <property type="term" value="P:response to estradiol"/>
    <property type="evidence" value="ECO:0000270"/>
    <property type="project" value="RGD"/>
</dbReference>
<dbReference type="GO" id="GO:0034405">
    <property type="term" value="P:response to fluid shear stress"/>
    <property type="evidence" value="ECO:0000270"/>
    <property type="project" value="RGD"/>
</dbReference>
<dbReference type="GO" id="GO:0032496">
    <property type="term" value="P:response to lipopolysaccharide"/>
    <property type="evidence" value="ECO:0000270"/>
    <property type="project" value="RGD"/>
</dbReference>
<dbReference type="GO" id="GO:0009612">
    <property type="term" value="P:response to mechanical stimulus"/>
    <property type="evidence" value="ECO:0000270"/>
    <property type="project" value="RGD"/>
</dbReference>
<dbReference type="GO" id="GO:0009266">
    <property type="term" value="P:response to temperature stimulus"/>
    <property type="evidence" value="ECO:0000270"/>
    <property type="project" value="RGD"/>
</dbReference>
<dbReference type="FunFam" id="2.60.40.10:FF:000746">
    <property type="entry name" value="Tissue factor"/>
    <property type="match status" value="1"/>
</dbReference>
<dbReference type="Gene3D" id="2.60.40.10">
    <property type="entry name" value="Immunoglobulins"/>
    <property type="match status" value="2"/>
</dbReference>
<dbReference type="InterPro" id="IPR003961">
    <property type="entry name" value="FN3_dom"/>
</dbReference>
<dbReference type="InterPro" id="IPR036116">
    <property type="entry name" value="FN3_sf"/>
</dbReference>
<dbReference type="InterPro" id="IPR013783">
    <property type="entry name" value="Ig-like_fold"/>
</dbReference>
<dbReference type="InterPro" id="IPR015373">
    <property type="entry name" value="Interferon/interleukin_rcp_dom"/>
</dbReference>
<dbReference type="InterPro" id="IPR001187">
    <property type="entry name" value="Tissue_factor"/>
</dbReference>
<dbReference type="InterPro" id="IPR030472">
    <property type="entry name" value="Tissue_Factor_CS"/>
</dbReference>
<dbReference type="InterPro" id="IPR050650">
    <property type="entry name" value="Type-II_Cytokine-TF_Rcpt"/>
</dbReference>
<dbReference type="PANTHER" id="PTHR20859">
    <property type="entry name" value="INTERFERON/INTERLEUKIN RECEPTOR"/>
    <property type="match status" value="1"/>
</dbReference>
<dbReference type="PANTHER" id="PTHR20859:SF22">
    <property type="entry name" value="TISSUE FACTOR"/>
    <property type="match status" value="1"/>
</dbReference>
<dbReference type="Pfam" id="PF09294">
    <property type="entry name" value="Interfer-bind"/>
    <property type="match status" value="1"/>
</dbReference>
<dbReference type="Pfam" id="PF01108">
    <property type="entry name" value="Tissue_fac"/>
    <property type="match status" value="1"/>
</dbReference>
<dbReference type="PIRSF" id="PIRSF002498">
    <property type="entry name" value="Tissue_factor_3"/>
    <property type="match status" value="1"/>
</dbReference>
<dbReference type="PRINTS" id="PR00346">
    <property type="entry name" value="TISSUEFACTOR"/>
</dbReference>
<dbReference type="SUPFAM" id="SSF49265">
    <property type="entry name" value="Fibronectin type III"/>
    <property type="match status" value="2"/>
</dbReference>
<dbReference type="PROSITE" id="PS00621">
    <property type="entry name" value="TISSUE_FACTOR"/>
    <property type="match status" value="1"/>
</dbReference>
<accession>P42533</accession>
<keyword id="KW-0094">Blood coagulation</keyword>
<keyword id="KW-1015">Disulfide bond</keyword>
<keyword id="KW-0325">Glycoprotein</keyword>
<keyword id="KW-0356">Hemostasis</keyword>
<keyword id="KW-0449">Lipoprotein</keyword>
<keyword id="KW-0472">Membrane</keyword>
<keyword id="KW-0564">Palmitate</keyword>
<keyword id="KW-1185">Reference proteome</keyword>
<keyword id="KW-0732">Signal</keyword>
<keyword id="KW-0812">Transmembrane</keyword>
<keyword id="KW-1133">Transmembrane helix</keyword>
<feature type="signal peptide" evidence="1">
    <location>
        <begin position="1"/>
        <end position="28"/>
    </location>
</feature>
<feature type="chain" id="PRO_0000033641" description="Tissue factor">
    <location>
        <begin position="29"/>
        <end position="295"/>
    </location>
</feature>
<feature type="topological domain" description="Extracellular" evidence="3">
    <location>
        <begin position="29"/>
        <end position="252"/>
    </location>
</feature>
<feature type="transmembrane region" description="Helical" evidence="3">
    <location>
        <begin position="253"/>
        <end position="275"/>
    </location>
</feature>
<feature type="topological domain" description="Cytoplasmic" evidence="3">
    <location>
        <begin position="276"/>
        <end position="295"/>
    </location>
</feature>
<feature type="short sequence motif" description="WKS motif">
    <location>
        <begin position="246"/>
        <end position="248"/>
    </location>
</feature>
<feature type="lipid moiety-binding region" description="S-palmitoyl cysteine" evidence="1">
    <location>
        <position position="276"/>
    </location>
</feature>
<feature type="glycosylation site" description="N-linked (GlcNAc...) asparagine" evidence="3">
    <location>
        <position position="38"/>
    </location>
</feature>
<feature type="glycosylation site" description="N-linked (GlcNAc...) asparagine" evidence="3">
    <location>
        <position position="58"/>
    </location>
</feature>
<feature type="glycosylation site" description="N-linked (GlcNAc...) asparagine" evidence="3">
    <location>
        <position position="95"/>
    </location>
</feature>
<feature type="glycosylation site" description="N-linked (GlcNAc...) asparagine" evidence="3">
    <location>
        <position position="109"/>
    </location>
</feature>
<feature type="glycosylation site" description="N-linked (GlcNAc...) asparagine" evidence="3">
    <location>
        <position position="170"/>
    </location>
</feature>
<feature type="glycosylation site" description="N-linked (GlcNAc...) asparagine" evidence="3">
    <location>
        <position position="201"/>
    </location>
</feature>
<feature type="disulfide bond" evidence="1">
    <location>
        <begin position="76"/>
        <end position="84"/>
    </location>
</feature>
<feature type="disulfide bond" evidence="1">
    <location>
        <begin position="219"/>
        <end position="242"/>
    </location>
</feature>
<protein>
    <recommendedName>
        <fullName>Tissue factor</fullName>
        <shortName>TF</shortName>
    </recommendedName>
    <alternativeName>
        <fullName>Coagulation factor III</fullName>
    </alternativeName>
    <cdAntigenName>CD142</cdAntigenName>
</protein>
<organism>
    <name type="scientific">Rattus norvegicus</name>
    <name type="common">Rat</name>
    <dbReference type="NCBI Taxonomy" id="10116"/>
    <lineage>
        <taxon>Eukaryota</taxon>
        <taxon>Metazoa</taxon>
        <taxon>Chordata</taxon>
        <taxon>Craniata</taxon>
        <taxon>Vertebrata</taxon>
        <taxon>Euteleostomi</taxon>
        <taxon>Mammalia</taxon>
        <taxon>Eutheria</taxon>
        <taxon>Euarchontoglires</taxon>
        <taxon>Glires</taxon>
        <taxon>Rodentia</taxon>
        <taxon>Myomorpha</taxon>
        <taxon>Muroidea</taxon>
        <taxon>Muridae</taxon>
        <taxon>Murinae</taxon>
        <taxon>Rattus</taxon>
    </lineage>
</organism>
<evidence type="ECO:0000250" key="1"/>
<evidence type="ECO:0000250" key="2">
    <source>
        <dbReference type="UniProtKB" id="P13726"/>
    </source>
</evidence>
<evidence type="ECO:0000255" key="3"/>
<evidence type="ECO:0000305" key="4"/>
<reference key="1">
    <citation type="journal article" date="1996" name="Thromb. Haemost.">
        <title>Cloning of the rat tissue factor cDNA and promoter: identification of a serum-response region.</title>
        <authorList>
            <person name="Taby O."/>
            <person name="Rosenfield C.L."/>
            <person name="Bogdanov V."/>
            <person name="Nemerson Y."/>
            <person name="Taubman M.B."/>
        </authorList>
    </citation>
    <scope>NUCLEOTIDE SEQUENCE [MRNA]</scope>
    <source>
        <strain>Sprague-Dawley</strain>
    </source>
</reference>
<sequence length="295" mass="33444">MAIPMRPRLLAALAPTFLGFLLLQVAVGAGTPPGKAFNLTWISTDFKTILEWQPKPTNYTYTVQISDRSRNWKYKCTGTTDTECDLTDEIVKDVNWTYEARVLSVPWRNSTHGKETLFGTHGEEPPFTNARKFLPYRDTKIGQPVIQKYEQGGTKLKVTVKDSFTLVRKNGTFLTLRQVFGNDLGYILTYRKDSSTGRKTNTTHTNEFLIDVEKGVSYCFFAQAVIFSRKTNHKSPESITKCTEQWKSVLGETLIIVGAVVFLVTVFIILLTISLCKRRKNRAGQKRKNTPSRLA</sequence>
<proteinExistence type="evidence at transcript level"/>